<organism>
    <name type="scientific">Mycolicibacterium paratuberculosis (strain ATCC BAA-968 / K-10)</name>
    <name type="common">Mycobacterium paratuberculosis</name>
    <dbReference type="NCBI Taxonomy" id="262316"/>
    <lineage>
        <taxon>Bacteria</taxon>
        <taxon>Bacillati</taxon>
        <taxon>Actinomycetota</taxon>
        <taxon>Actinomycetes</taxon>
        <taxon>Mycobacteriales</taxon>
        <taxon>Mycobacteriaceae</taxon>
        <taxon>Mycobacterium</taxon>
        <taxon>Mycobacterium avium complex (MAC)</taxon>
    </lineage>
</organism>
<keyword id="KW-0028">Amino-acid biosynthesis</keyword>
<keyword id="KW-0057">Aromatic amino acid biosynthesis</keyword>
<keyword id="KW-0456">Lyase</keyword>
<keyword id="KW-0584">Phenylalanine biosynthesis</keyword>
<keyword id="KW-1185">Reference proteome</keyword>
<accession>Q745J2</accession>
<protein>
    <recommendedName>
        <fullName>Prephenate dehydratase</fullName>
        <shortName>PDT</shortName>
        <ecNumber>4.2.1.51</ecNumber>
    </recommendedName>
</protein>
<dbReference type="EC" id="4.2.1.51"/>
<dbReference type="EMBL" id="AE016958">
    <property type="protein sequence ID" value="AAS02510.1"/>
    <property type="molecule type" value="Genomic_DNA"/>
</dbReference>
<dbReference type="RefSeq" id="WP_003872300.1">
    <property type="nucleotide sequence ID" value="NZ_CP106873.1"/>
</dbReference>
<dbReference type="SMR" id="Q745J2"/>
<dbReference type="STRING" id="262316.MAP_0193"/>
<dbReference type="GeneID" id="75268108"/>
<dbReference type="KEGG" id="mpa:MAP_0193"/>
<dbReference type="eggNOG" id="COG0077">
    <property type="taxonomic scope" value="Bacteria"/>
</dbReference>
<dbReference type="HOGENOM" id="CLU_035008_0_0_11"/>
<dbReference type="UniPathway" id="UPA00121">
    <property type="reaction ID" value="UER00345"/>
</dbReference>
<dbReference type="Proteomes" id="UP000000580">
    <property type="component" value="Chromosome"/>
</dbReference>
<dbReference type="GO" id="GO:0005737">
    <property type="term" value="C:cytoplasm"/>
    <property type="evidence" value="ECO:0007669"/>
    <property type="project" value="TreeGrafter"/>
</dbReference>
<dbReference type="GO" id="GO:0004664">
    <property type="term" value="F:prephenate dehydratase activity"/>
    <property type="evidence" value="ECO:0007669"/>
    <property type="project" value="UniProtKB-EC"/>
</dbReference>
<dbReference type="GO" id="GO:0042803">
    <property type="term" value="F:protein homodimerization activity"/>
    <property type="evidence" value="ECO:0000250"/>
    <property type="project" value="UniProtKB"/>
</dbReference>
<dbReference type="GO" id="GO:0009094">
    <property type="term" value="P:L-phenylalanine biosynthetic process"/>
    <property type="evidence" value="ECO:0007669"/>
    <property type="project" value="UniProtKB-UniPathway"/>
</dbReference>
<dbReference type="CDD" id="cd04905">
    <property type="entry name" value="ACT_CM-PDT"/>
    <property type="match status" value="1"/>
</dbReference>
<dbReference type="CDD" id="cd13632">
    <property type="entry name" value="PBP2_Aa-PDT_like"/>
    <property type="match status" value="1"/>
</dbReference>
<dbReference type="FunFam" id="3.30.70.260:FF:000012">
    <property type="entry name" value="Prephenate dehydratase"/>
    <property type="match status" value="1"/>
</dbReference>
<dbReference type="FunFam" id="3.40.190.10:FF:000064">
    <property type="entry name" value="Prephenate dehydratase"/>
    <property type="match status" value="1"/>
</dbReference>
<dbReference type="FunFam" id="3.40.190.10:FF:000146">
    <property type="entry name" value="Prephenate dehydratase"/>
    <property type="match status" value="1"/>
</dbReference>
<dbReference type="Gene3D" id="3.30.70.260">
    <property type="match status" value="1"/>
</dbReference>
<dbReference type="Gene3D" id="3.40.190.10">
    <property type="entry name" value="Periplasmic binding protein-like II"/>
    <property type="match status" value="2"/>
</dbReference>
<dbReference type="InterPro" id="IPR045865">
    <property type="entry name" value="ACT-like_dom_sf"/>
</dbReference>
<dbReference type="InterPro" id="IPR002912">
    <property type="entry name" value="ACT_dom"/>
</dbReference>
<dbReference type="InterPro" id="IPR008242">
    <property type="entry name" value="Chor_mutase/pphenate_deHydtase"/>
</dbReference>
<dbReference type="InterPro" id="IPR001086">
    <property type="entry name" value="Preph_deHydtase"/>
</dbReference>
<dbReference type="InterPro" id="IPR018528">
    <property type="entry name" value="Preph_deHydtase_CS"/>
</dbReference>
<dbReference type="NCBIfam" id="NF008865">
    <property type="entry name" value="PRK11898.1"/>
    <property type="match status" value="1"/>
</dbReference>
<dbReference type="PANTHER" id="PTHR21022">
    <property type="entry name" value="PREPHENATE DEHYDRATASE P PROTEIN"/>
    <property type="match status" value="1"/>
</dbReference>
<dbReference type="PANTHER" id="PTHR21022:SF19">
    <property type="entry name" value="PREPHENATE DEHYDRATASE-RELATED"/>
    <property type="match status" value="1"/>
</dbReference>
<dbReference type="Pfam" id="PF01842">
    <property type="entry name" value="ACT"/>
    <property type="match status" value="1"/>
</dbReference>
<dbReference type="Pfam" id="PF00800">
    <property type="entry name" value="PDT"/>
    <property type="match status" value="1"/>
</dbReference>
<dbReference type="PIRSF" id="PIRSF001500">
    <property type="entry name" value="Chor_mut_pdt_Ppr"/>
    <property type="match status" value="1"/>
</dbReference>
<dbReference type="SUPFAM" id="SSF55021">
    <property type="entry name" value="ACT-like"/>
    <property type="match status" value="1"/>
</dbReference>
<dbReference type="SUPFAM" id="SSF53850">
    <property type="entry name" value="Periplasmic binding protein-like II"/>
    <property type="match status" value="1"/>
</dbReference>
<dbReference type="PROSITE" id="PS51671">
    <property type="entry name" value="ACT"/>
    <property type="match status" value="1"/>
</dbReference>
<dbReference type="PROSITE" id="PS00858">
    <property type="entry name" value="PREPHENATE_DEHYDR_2"/>
    <property type="match status" value="1"/>
</dbReference>
<dbReference type="PROSITE" id="PS51171">
    <property type="entry name" value="PREPHENATE_DEHYDR_3"/>
    <property type="match status" value="1"/>
</dbReference>
<reference key="1">
    <citation type="journal article" date="2005" name="Proc. Natl. Acad. Sci. U.S.A.">
        <title>The complete genome sequence of Mycobacterium avium subspecies paratuberculosis.</title>
        <authorList>
            <person name="Li L."/>
            <person name="Bannantine J.P."/>
            <person name="Zhang Q."/>
            <person name="Amonsin A."/>
            <person name="May B.J."/>
            <person name="Alt D."/>
            <person name="Banerji N."/>
            <person name="Kanjilal S."/>
            <person name="Kapur V."/>
        </authorList>
    </citation>
    <scope>NUCLEOTIDE SEQUENCE [LARGE SCALE GENOMIC DNA]</scope>
    <source>
        <strain>ATCC BAA-968 / K-10</strain>
    </source>
</reference>
<evidence type="ECO:0000250" key="1"/>
<evidence type="ECO:0000255" key="2">
    <source>
        <dbReference type="PROSITE-ProRule" id="PRU00517"/>
    </source>
</evidence>
<evidence type="ECO:0000255" key="3">
    <source>
        <dbReference type="PROSITE-ProRule" id="PRU01007"/>
    </source>
</evidence>
<comment type="catalytic activity">
    <reaction>
        <text>prephenate + H(+) = 3-phenylpyruvate + CO2 + H2O</text>
        <dbReference type="Rhea" id="RHEA:21648"/>
        <dbReference type="ChEBI" id="CHEBI:15377"/>
        <dbReference type="ChEBI" id="CHEBI:15378"/>
        <dbReference type="ChEBI" id="CHEBI:16526"/>
        <dbReference type="ChEBI" id="CHEBI:18005"/>
        <dbReference type="ChEBI" id="CHEBI:29934"/>
        <dbReference type="EC" id="4.2.1.51"/>
    </reaction>
</comment>
<comment type="pathway">
    <text>Amino-acid biosynthesis; L-phenylalanine biosynthesis; phenylpyruvate from prephenate: step 1/1.</text>
</comment>
<comment type="subunit">
    <text evidence="1">Homodimer.</text>
</comment>
<sequence>MARIAYLGPEGTFTEAALRQITAAGLVPGQGADGVRPTPVDGTPAALDAVRDGAADYACVPIENSIDGSVTPTLDSLAIGSPLQVFAETTLDVAFSIVVKPGLSAADVRTLAAIGVAAAQVRQWVAANLAGAQLRPAYSNADAAQQVAEGRADAAVTSPLAAARWGLDTLADGVVDEPNARTRFVLVGPPAPPPARTGADRTSVVLRIDNAPGALLAALAEFGIRGIDLTRIESRPTRTGLGIYRFFADCVGHIDDEPVAEALKALHRRCADVRYLGSWPTGTPAGALPPSTEEAVRWLAAVRDGKPEPPGESRR</sequence>
<gene>
    <name type="primary">pheA</name>
    <name type="ordered locus">MAP_0193</name>
</gene>
<proteinExistence type="inferred from homology"/>
<name>PHEA_MYCPA</name>
<feature type="chain" id="PRO_0000382038" description="Prephenate dehydratase">
    <location>
        <begin position="1"/>
        <end position="315"/>
    </location>
</feature>
<feature type="domain" description="Prephenate dehydratase" evidence="2">
    <location>
        <begin position="3"/>
        <end position="189"/>
    </location>
</feature>
<feature type="domain" description="ACT" evidence="3">
    <location>
        <begin position="203"/>
        <end position="280"/>
    </location>
</feature>
<feature type="site" description="Essential for activity" evidence="1">
    <location>
        <position position="182"/>
    </location>
</feature>